<evidence type="ECO:0000305" key="1"/>
<accession>P59707</accession>
<name>Y1002_CHLCV</name>
<gene>
    <name type="ordered locus">CCA_01002</name>
</gene>
<comment type="similarity">
    <text evidence="1">Belongs to the UPF0242 family.</text>
</comment>
<reference key="1">
    <citation type="journal article" date="2003" name="Nucleic Acids Res.">
        <title>Genome sequence of Chlamydophila caviae (Chlamydia psittaci GPIC): examining the role of niche-specific genes in the evolution of the Chlamydiaceae.</title>
        <authorList>
            <person name="Read T.D."/>
            <person name="Myers G.S.A."/>
            <person name="Brunham R.C."/>
            <person name="Nelson W.C."/>
            <person name="Paulsen I.T."/>
            <person name="Heidelberg J.F."/>
            <person name="Holtzapple E.K."/>
            <person name="Khouri H.M."/>
            <person name="Federova N.B."/>
            <person name="Carty H.A."/>
            <person name="Umayam L.A."/>
            <person name="Haft D.H."/>
            <person name="Peterson J.D."/>
            <person name="Beanan M.J."/>
            <person name="White O."/>
            <person name="Salzberg S.L."/>
            <person name="Hsia R.-C."/>
            <person name="McClarty G."/>
            <person name="Rank R.G."/>
            <person name="Bavoil P.M."/>
            <person name="Fraser C.M."/>
        </authorList>
    </citation>
    <scope>NUCLEOTIDE SEQUENCE [LARGE SCALE GENOMIC DNA]</scope>
    <source>
        <strain>ATCC VR-813 / DSM 19441 / 03DC25 / GPIC</strain>
    </source>
</reference>
<protein>
    <recommendedName>
        <fullName>UPF0242 protein CCA_01002</fullName>
    </recommendedName>
</protein>
<sequence length="401" mass="46401">MSFVKKKFHPISRYYNYLFPIAAFLLPLICLPFLSASQKNYSYFIFSIISAVGWFFSIGLREKQLKMAAGQLLQTKIRKIVEKDEGLRKICESVEERQYESQQLRSQNQKLLNQLLHVRSVFMKTKADTQRMEGAIAHLREENQCLQLQLDALSQECREKEEEAQQLNRELADALAYQQVLNEEYQATFTEQHNMLDVRQVYIGKLESKVQDLMCEIRNLLQLESNMVDSFPRQATVNSQEQPKQLLSELKKIAFKVENAEAASSLTASRYIRSESSVHNYSLECRQLFDNLREESLGMLFVYAPQSQRAVFANSLFKTWTGYGVEDFLNAGGDIVISGLPQWETDLRLLDRKERSGKIIIKTKNHGQIPFYYCLTILNKGPLHNHVLGVLYPVRIDAFRG</sequence>
<proteinExistence type="inferred from homology"/>
<dbReference type="EMBL" id="AE015925">
    <property type="protein sequence ID" value="AAP05741.1"/>
    <property type="molecule type" value="Genomic_DNA"/>
</dbReference>
<dbReference type="RefSeq" id="WP_011006954.1">
    <property type="nucleotide sequence ID" value="NC_003361.3"/>
</dbReference>
<dbReference type="SMR" id="P59707"/>
<dbReference type="STRING" id="227941.CCA_01002"/>
<dbReference type="KEGG" id="cca:CCA_01002"/>
<dbReference type="eggNOG" id="COG4372">
    <property type="taxonomic scope" value="Bacteria"/>
</dbReference>
<dbReference type="HOGENOM" id="CLU_058964_0_0_0"/>
<dbReference type="OrthoDB" id="18689at2"/>
<dbReference type="Proteomes" id="UP000002193">
    <property type="component" value="Chromosome"/>
</dbReference>
<dbReference type="InterPro" id="IPR009623">
    <property type="entry name" value="UPF0242_N"/>
</dbReference>
<dbReference type="InterPro" id="IPR040578">
    <property type="entry name" value="UPF0242_PAS"/>
</dbReference>
<dbReference type="Pfam" id="PF18095">
    <property type="entry name" value="PAS_12"/>
    <property type="match status" value="1"/>
</dbReference>
<dbReference type="Pfam" id="PF06785">
    <property type="entry name" value="UPF0242"/>
    <property type="match status" value="1"/>
</dbReference>
<organism>
    <name type="scientific">Chlamydia caviae (strain ATCC VR-813 / DSM 19441 / 03DC25 / GPIC)</name>
    <name type="common">Chlamydophila caviae</name>
    <dbReference type="NCBI Taxonomy" id="227941"/>
    <lineage>
        <taxon>Bacteria</taxon>
        <taxon>Pseudomonadati</taxon>
        <taxon>Chlamydiota</taxon>
        <taxon>Chlamydiia</taxon>
        <taxon>Chlamydiales</taxon>
        <taxon>Chlamydiaceae</taxon>
        <taxon>Chlamydia/Chlamydophila group</taxon>
        <taxon>Chlamydia</taxon>
    </lineage>
</organism>
<feature type="chain" id="PRO_0000216820" description="UPF0242 protein CCA_01002">
    <location>
        <begin position="1"/>
        <end position="401"/>
    </location>
</feature>